<sequence length="511" mass="55491">MQISHNTASPLICVQNIYKSYSGVEVLKGIDFTLHAGEVHALLGGNGAGKSTLMKIIAGIVPPDGGTIDIAGVRCSHLTPLKAHQYGIYLVPQEPLLFPSLSVRENILFGLQGRQASTEKMQQLLKAMGCQLDPASAAGTLDVADRQIVEIMRGLMRDSRILILDEPTASLTPAETDRLFTRLQELLKKGVGIVFISHKLPEIRQLAHCVSVMRDGKIALFGKTHDLSTDEIIQAITPATQGVSLSASQKLWLELPGSRPQNERGATVLALESLTGEGFMNINLEVRAGEILGLAGLVGAGRTELAETLYGIRPVNAGRMLFNGEEINALTTQQRLQLGLVYLPEDRQSSGLYLDASLAWNVCSLTHNQKGFWIKPQRDNATLERYHRALNIKLNNAEQAARTLSGGNQQKVLIAKCLEASPQLLIVDEPTRGVDVSARSDIYQLLRSIAQQNVAVLFISSDLEEIEQMADRVYVMHQGELGGPALCGEEINVDTIMHVAFGEHGASEATC</sequence>
<gene>
    <name type="primary">lsrA</name>
    <name type="ordered locus">SCH_3963.1</name>
</gene>
<dbReference type="EC" id="7.6.2.13" evidence="1"/>
<dbReference type="EMBL" id="AE017220">
    <property type="status" value="NOT_ANNOTATED_CDS"/>
    <property type="molecule type" value="Genomic_DNA"/>
</dbReference>
<dbReference type="SMR" id="P0C886"/>
<dbReference type="Proteomes" id="UP000000538">
    <property type="component" value="Chromosome"/>
</dbReference>
<dbReference type="GO" id="GO:0005886">
    <property type="term" value="C:plasma membrane"/>
    <property type="evidence" value="ECO:0007669"/>
    <property type="project" value="UniProtKB-SubCell"/>
</dbReference>
<dbReference type="GO" id="GO:0005524">
    <property type="term" value="F:ATP binding"/>
    <property type="evidence" value="ECO:0007669"/>
    <property type="project" value="UniProtKB-KW"/>
</dbReference>
<dbReference type="GO" id="GO:0016887">
    <property type="term" value="F:ATP hydrolysis activity"/>
    <property type="evidence" value="ECO:0007669"/>
    <property type="project" value="InterPro"/>
</dbReference>
<dbReference type="CDD" id="cd03216">
    <property type="entry name" value="ABC_Carb_Monos_I"/>
    <property type="match status" value="1"/>
</dbReference>
<dbReference type="CDD" id="cd03215">
    <property type="entry name" value="ABC_Carb_Monos_II"/>
    <property type="match status" value="1"/>
</dbReference>
<dbReference type="Gene3D" id="3.40.50.300">
    <property type="entry name" value="P-loop containing nucleotide triphosphate hydrolases"/>
    <property type="match status" value="2"/>
</dbReference>
<dbReference type="InterPro" id="IPR003593">
    <property type="entry name" value="AAA+_ATPase"/>
</dbReference>
<dbReference type="InterPro" id="IPR050107">
    <property type="entry name" value="ABC_carbohydrate_import_ATPase"/>
</dbReference>
<dbReference type="InterPro" id="IPR003439">
    <property type="entry name" value="ABC_transporter-like_ATP-bd"/>
</dbReference>
<dbReference type="InterPro" id="IPR017871">
    <property type="entry name" value="ABC_transporter-like_CS"/>
</dbReference>
<dbReference type="InterPro" id="IPR027417">
    <property type="entry name" value="P-loop_NTPase"/>
</dbReference>
<dbReference type="NCBIfam" id="NF011967">
    <property type="entry name" value="PRK15439.1"/>
    <property type="match status" value="1"/>
</dbReference>
<dbReference type="PANTHER" id="PTHR43790:SF2">
    <property type="entry name" value="AUTOINDUCER 2 IMPORT ATP-BINDING PROTEIN LSRA"/>
    <property type="match status" value="1"/>
</dbReference>
<dbReference type="PANTHER" id="PTHR43790">
    <property type="entry name" value="CARBOHYDRATE TRANSPORT ATP-BINDING PROTEIN MG119-RELATED"/>
    <property type="match status" value="1"/>
</dbReference>
<dbReference type="Pfam" id="PF00005">
    <property type="entry name" value="ABC_tran"/>
    <property type="match status" value="2"/>
</dbReference>
<dbReference type="SMART" id="SM00382">
    <property type="entry name" value="AAA"/>
    <property type="match status" value="2"/>
</dbReference>
<dbReference type="SUPFAM" id="SSF52540">
    <property type="entry name" value="P-loop containing nucleoside triphosphate hydrolases"/>
    <property type="match status" value="2"/>
</dbReference>
<dbReference type="PROSITE" id="PS00211">
    <property type="entry name" value="ABC_TRANSPORTER_1"/>
    <property type="match status" value="1"/>
</dbReference>
<dbReference type="PROSITE" id="PS50893">
    <property type="entry name" value="ABC_TRANSPORTER_2"/>
    <property type="match status" value="2"/>
</dbReference>
<proteinExistence type="inferred from homology"/>
<accession>P0C886</accession>
<evidence type="ECO:0000250" key="1">
    <source>
        <dbReference type="UniProtKB" id="P77257"/>
    </source>
</evidence>
<evidence type="ECO:0000255" key="2">
    <source>
        <dbReference type="PROSITE-ProRule" id="PRU00434"/>
    </source>
</evidence>
<evidence type="ECO:0000305" key="3"/>
<protein>
    <recommendedName>
        <fullName evidence="1">Autoinducer 2 import ATP-binding protein LsrA</fullName>
        <shortName evidence="1">AI-2 import ATP-binding protein LsrA</shortName>
        <ecNumber evidence="1">7.6.2.13</ecNumber>
    </recommendedName>
</protein>
<feature type="chain" id="PRO_0000351300" description="Autoinducer 2 import ATP-binding protein LsrA">
    <location>
        <begin position="1"/>
        <end position="511"/>
    </location>
</feature>
<feature type="domain" description="ABC transporter 1" evidence="2">
    <location>
        <begin position="12"/>
        <end position="240"/>
    </location>
</feature>
<feature type="domain" description="ABC transporter 2" evidence="2">
    <location>
        <begin position="263"/>
        <end position="503"/>
    </location>
</feature>
<feature type="binding site" evidence="2">
    <location>
        <begin position="44"/>
        <end position="51"/>
    </location>
    <ligand>
        <name>ATP</name>
        <dbReference type="ChEBI" id="CHEBI:30616"/>
    </ligand>
</feature>
<keyword id="KW-0067">ATP-binding</keyword>
<keyword id="KW-0997">Cell inner membrane</keyword>
<keyword id="KW-1003">Cell membrane</keyword>
<keyword id="KW-0472">Membrane</keyword>
<keyword id="KW-0547">Nucleotide-binding</keyword>
<keyword id="KW-0677">Repeat</keyword>
<keyword id="KW-1278">Translocase</keyword>
<keyword id="KW-0813">Transport</keyword>
<comment type="function">
    <text evidence="1">Part of the ABC transporter complex LsrABCD involved in autoinducer 2 (AI-2) import. Responsible for energy coupling to the transport system.</text>
</comment>
<comment type="catalytic activity">
    <reaction evidence="1">
        <text>ATP + H2O + (2R,4S)-2-methyl-2,3,3,4-tetrahydroxytetrahydrofuran-[AI-2-binding protein]Side 1 = ADP + phosphate + (2R,4S)-2-methyl-2,3,3,4-tetrahydroxytetrahydrofuranSide 2 + [AI-2-binding protein]Side 1.</text>
        <dbReference type="EC" id="7.6.2.13"/>
    </reaction>
</comment>
<comment type="subunit">
    <text evidence="1">The complex is composed of two ATP-binding proteins (LsrA), two transmembrane proteins (LsrC and LsrD) and a solute-binding protein (LsrB).</text>
</comment>
<comment type="subcellular location">
    <subcellularLocation>
        <location evidence="1">Cell inner membrane</location>
        <topology evidence="1">Peripheral membrane protein</topology>
    </subcellularLocation>
</comment>
<comment type="similarity">
    <text evidence="3">Belongs to the ABC transporter superfamily. AI-2 autoinducer porter (TC 3.A.1.2.8) family.</text>
</comment>
<comment type="sequence caution" evidence="3">
    <conflict type="frameshift">
        <sequence resource="EMBL" id="AE017220"/>
    </conflict>
</comment>
<reference key="1">
    <citation type="journal article" date="2005" name="Nucleic Acids Res.">
        <title>The genome sequence of Salmonella enterica serovar Choleraesuis, a highly invasive and resistant zoonotic pathogen.</title>
        <authorList>
            <person name="Chiu C.-H."/>
            <person name="Tang P."/>
            <person name="Chu C."/>
            <person name="Hu S."/>
            <person name="Bao Q."/>
            <person name="Yu J."/>
            <person name="Chou Y.-Y."/>
            <person name="Wang H.-S."/>
            <person name="Lee Y.-S."/>
        </authorList>
    </citation>
    <scope>NUCLEOTIDE SEQUENCE [LARGE SCALE GENOMIC DNA]</scope>
    <source>
        <strain>SC-B67</strain>
    </source>
</reference>
<name>LSRA_SALCH</name>
<organism>
    <name type="scientific">Salmonella choleraesuis (strain SC-B67)</name>
    <dbReference type="NCBI Taxonomy" id="321314"/>
    <lineage>
        <taxon>Bacteria</taxon>
        <taxon>Pseudomonadati</taxon>
        <taxon>Pseudomonadota</taxon>
        <taxon>Gammaproteobacteria</taxon>
        <taxon>Enterobacterales</taxon>
        <taxon>Enterobacteriaceae</taxon>
        <taxon>Salmonella</taxon>
    </lineage>
</organism>